<accession>A6WJ71</accession>
<proteinExistence type="inferred from homology"/>
<organism>
    <name type="scientific">Shewanella baltica (strain OS185)</name>
    <dbReference type="NCBI Taxonomy" id="402882"/>
    <lineage>
        <taxon>Bacteria</taxon>
        <taxon>Pseudomonadati</taxon>
        <taxon>Pseudomonadota</taxon>
        <taxon>Gammaproteobacteria</taxon>
        <taxon>Alteromonadales</taxon>
        <taxon>Shewanellaceae</taxon>
        <taxon>Shewanella</taxon>
    </lineage>
</organism>
<gene>
    <name evidence="1" type="primary">rpsI</name>
    <name type="ordered locus">Shew185_0703</name>
</gene>
<protein>
    <recommendedName>
        <fullName evidence="1">Small ribosomal subunit protein uS9</fullName>
    </recommendedName>
    <alternativeName>
        <fullName evidence="2">30S ribosomal protein S9</fullName>
    </alternativeName>
</protein>
<dbReference type="EMBL" id="CP000753">
    <property type="protein sequence ID" value="ABS06860.1"/>
    <property type="molecule type" value="Genomic_DNA"/>
</dbReference>
<dbReference type="RefSeq" id="WP_006083052.1">
    <property type="nucleotide sequence ID" value="NC_009665.1"/>
</dbReference>
<dbReference type="SMR" id="A6WJ71"/>
<dbReference type="GeneID" id="94726683"/>
<dbReference type="KEGG" id="sbm:Shew185_0703"/>
<dbReference type="HOGENOM" id="CLU_046483_2_1_6"/>
<dbReference type="GO" id="GO:0022627">
    <property type="term" value="C:cytosolic small ribosomal subunit"/>
    <property type="evidence" value="ECO:0007669"/>
    <property type="project" value="TreeGrafter"/>
</dbReference>
<dbReference type="GO" id="GO:0003723">
    <property type="term" value="F:RNA binding"/>
    <property type="evidence" value="ECO:0007669"/>
    <property type="project" value="TreeGrafter"/>
</dbReference>
<dbReference type="GO" id="GO:0003735">
    <property type="term" value="F:structural constituent of ribosome"/>
    <property type="evidence" value="ECO:0007669"/>
    <property type="project" value="InterPro"/>
</dbReference>
<dbReference type="GO" id="GO:0006412">
    <property type="term" value="P:translation"/>
    <property type="evidence" value="ECO:0007669"/>
    <property type="project" value="UniProtKB-UniRule"/>
</dbReference>
<dbReference type="FunFam" id="3.30.230.10:FF:000001">
    <property type="entry name" value="30S ribosomal protein S9"/>
    <property type="match status" value="1"/>
</dbReference>
<dbReference type="Gene3D" id="3.30.230.10">
    <property type="match status" value="1"/>
</dbReference>
<dbReference type="HAMAP" id="MF_00532_B">
    <property type="entry name" value="Ribosomal_uS9_B"/>
    <property type="match status" value="1"/>
</dbReference>
<dbReference type="InterPro" id="IPR020568">
    <property type="entry name" value="Ribosomal_Su5_D2-typ_SF"/>
</dbReference>
<dbReference type="InterPro" id="IPR000754">
    <property type="entry name" value="Ribosomal_uS9"/>
</dbReference>
<dbReference type="InterPro" id="IPR023035">
    <property type="entry name" value="Ribosomal_uS9_bac/plastid"/>
</dbReference>
<dbReference type="InterPro" id="IPR020574">
    <property type="entry name" value="Ribosomal_uS9_CS"/>
</dbReference>
<dbReference type="InterPro" id="IPR014721">
    <property type="entry name" value="Ribsml_uS5_D2-typ_fold_subgr"/>
</dbReference>
<dbReference type="NCBIfam" id="NF001099">
    <property type="entry name" value="PRK00132.1"/>
    <property type="match status" value="1"/>
</dbReference>
<dbReference type="PANTHER" id="PTHR21569">
    <property type="entry name" value="RIBOSOMAL PROTEIN S9"/>
    <property type="match status" value="1"/>
</dbReference>
<dbReference type="PANTHER" id="PTHR21569:SF1">
    <property type="entry name" value="SMALL RIBOSOMAL SUBUNIT PROTEIN US9M"/>
    <property type="match status" value="1"/>
</dbReference>
<dbReference type="Pfam" id="PF00380">
    <property type="entry name" value="Ribosomal_S9"/>
    <property type="match status" value="1"/>
</dbReference>
<dbReference type="SUPFAM" id="SSF54211">
    <property type="entry name" value="Ribosomal protein S5 domain 2-like"/>
    <property type="match status" value="1"/>
</dbReference>
<dbReference type="PROSITE" id="PS00360">
    <property type="entry name" value="RIBOSOMAL_S9"/>
    <property type="match status" value="1"/>
</dbReference>
<sequence length="130" mass="14536">MAATQYYGTGRRKTSTARVFAKAGSGNIVVNQRPLDQYFGRETARMVVRQPLELVEMTDKLDIYVTVKGGGITGQAGAIRHGITRALMQLDEALRPSLRSAGFVTRDARKVERKKVGLRKARRKPQFSKR</sequence>
<keyword id="KW-0687">Ribonucleoprotein</keyword>
<keyword id="KW-0689">Ribosomal protein</keyword>
<evidence type="ECO:0000255" key="1">
    <source>
        <dbReference type="HAMAP-Rule" id="MF_00532"/>
    </source>
</evidence>
<evidence type="ECO:0000305" key="2"/>
<comment type="similarity">
    <text evidence="1">Belongs to the universal ribosomal protein uS9 family.</text>
</comment>
<name>RS9_SHEB8</name>
<feature type="chain" id="PRO_1000051319" description="Small ribosomal subunit protein uS9">
    <location>
        <begin position="1"/>
        <end position="130"/>
    </location>
</feature>
<reference key="1">
    <citation type="submission" date="2007-07" db="EMBL/GenBank/DDBJ databases">
        <title>Complete sequence of chromosome of Shewanella baltica OS185.</title>
        <authorList>
            <consortium name="US DOE Joint Genome Institute"/>
            <person name="Copeland A."/>
            <person name="Lucas S."/>
            <person name="Lapidus A."/>
            <person name="Barry K."/>
            <person name="Glavina del Rio T."/>
            <person name="Dalin E."/>
            <person name="Tice H."/>
            <person name="Pitluck S."/>
            <person name="Sims D."/>
            <person name="Brettin T."/>
            <person name="Bruce D."/>
            <person name="Detter J.C."/>
            <person name="Han C."/>
            <person name="Schmutz J."/>
            <person name="Larimer F."/>
            <person name="Land M."/>
            <person name="Hauser L."/>
            <person name="Kyrpides N."/>
            <person name="Mikhailova N."/>
            <person name="Brettar I."/>
            <person name="Rodrigues J."/>
            <person name="Konstantinidis K."/>
            <person name="Tiedje J."/>
            <person name="Richardson P."/>
        </authorList>
    </citation>
    <scope>NUCLEOTIDE SEQUENCE [LARGE SCALE GENOMIC DNA]</scope>
    <source>
        <strain>OS185</strain>
    </source>
</reference>